<dbReference type="EC" id="6.1.1.1" evidence="1"/>
<dbReference type="EMBL" id="CP000030">
    <property type="protein sequence ID" value="AAV87025.1"/>
    <property type="molecule type" value="Genomic_DNA"/>
</dbReference>
<dbReference type="RefSeq" id="WP_011114624.1">
    <property type="nucleotide sequence ID" value="NC_004842.2"/>
</dbReference>
<dbReference type="SMR" id="Q5P9K5"/>
<dbReference type="KEGG" id="ama:AM1205"/>
<dbReference type="HOGENOM" id="CLU_024003_0_3_5"/>
<dbReference type="GO" id="GO:0005829">
    <property type="term" value="C:cytosol"/>
    <property type="evidence" value="ECO:0007669"/>
    <property type="project" value="TreeGrafter"/>
</dbReference>
<dbReference type="GO" id="GO:0005524">
    <property type="term" value="F:ATP binding"/>
    <property type="evidence" value="ECO:0007669"/>
    <property type="project" value="UniProtKB-UniRule"/>
</dbReference>
<dbReference type="GO" id="GO:0003723">
    <property type="term" value="F:RNA binding"/>
    <property type="evidence" value="ECO:0007669"/>
    <property type="project" value="UniProtKB-KW"/>
</dbReference>
<dbReference type="GO" id="GO:0004831">
    <property type="term" value="F:tyrosine-tRNA ligase activity"/>
    <property type="evidence" value="ECO:0007669"/>
    <property type="project" value="UniProtKB-UniRule"/>
</dbReference>
<dbReference type="GO" id="GO:0006437">
    <property type="term" value="P:tyrosyl-tRNA aminoacylation"/>
    <property type="evidence" value="ECO:0007669"/>
    <property type="project" value="UniProtKB-UniRule"/>
</dbReference>
<dbReference type="CDD" id="cd00165">
    <property type="entry name" value="S4"/>
    <property type="match status" value="1"/>
</dbReference>
<dbReference type="CDD" id="cd00805">
    <property type="entry name" value="TyrRS_core"/>
    <property type="match status" value="1"/>
</dbReference>
<dbReference type="Gene3D" id="3.40.50.620">
    <property type="entry name" value="HUPs"/>
    <property type="match status" value="1"/>
</dbReference>
<dbReference type="Gene3D" id="3.10.290.10">
    <property type="entry name" value="RNA-binding S4 domain"/>
    <property type="match status" value="1"/>
</dbReference>
<dbReference type="Gene3D" id="1.10.240.10">
    <property type="entry name" value="Tyrosyl-Transfer RNA Synthetase"/>
    <property type="match status" value="1"/>
</dbReference>
<dbReference type="HAMAP" id="MF_02006">
    <property type="entry name" value="Tyr_tRNA_synth_type1"/>
    <property type="match status" value="1"/>
</dbReference>
<dbReference type="InterPro" id="IPR002305">
    <property type="entry name" value="aa-tRNA-synth_Ic"/>
</dbReference>
<dbReference type="InterPro" id="IPR014729">
    <property type="entry name" value="Rossmann-like_a/b/a_fold"/>
</dbReference>
<dbReference type="InterPro" id="IPR036986">
    <property type="entry name" value="S4_RNA-bd_sf"/>
</dbReference>
<dbReference type="InterPro" id="IPR002307">
    <property type="entry name" value="Tyr-tRNA-ligase"/>
</dbReference>
<dbReference type="InterPro" id="IPR024088">
    <property type="entry name" value="Tyr-tRNA-ligase_bac-type"/>
</dbReference>
<dbReference type="InterPro" id="IPR024107">
    <property type="entry name" value="Tyr-tRNA-ligase_bac_1"/>
</dbReference>
<dbReference type="NCBIfam" id="TIGR00234">
    <property type="entry name" value="tyrS"/>
    <property type="match status" value="1"/>
</dbReference>
<dbReference type="PANTHER" id="PTHR11766:SF0">
    <property type="entry name" value="TYROSINE--TRNA LIGASE, MITOCHONDRIAL"/>
    <property type="match status" value="1"/>
</dbReference>
<dbReference type="PANTHER" id="PTHR11766">
    <property type="entry name" value="TYROSYL-TRNA SYNTHETASE"/>
    <property type="match status" value="1"/>
</dbReference>
<dbReference type="Pfam" id="PF00579">
    <property type="entry name" value="tRNA-synt_1b"/>
    <property type="match status" value="1"/>
</dbReference>
<dbReference type="PRINTS" id="PR01040">
    <property type="entry name" value="TRNASYNTHTYR"/>
</dbReference>
<dbReference type="SUPFAM" id="SSF55174">
    <property type="entry name" value="Alpha-L RNA-binding motif"/>
    <property type="match status" value="1"/>
</dbReference>
<dbReference type="SUPFAM" id="SSF52374">
    <property type="entry name" value="Nucleotidylyl transferase"/>
    <property type="match status" value="1"/>
</dbReference>
<dbReference type="PROSITE" id="PS50889">
    <property type="entry name" value="S4"/>
    <property type="match status" value="1"/>
</dbReference>
<feature type="chain" id="PRO_0000234665" description="Tyrosine--tRNA ligase">
    <location>
        <begin position="1"/>
        <end position="414"/>
    </location>
</feature>
<feature type="domain" description="S4 RNA-binding" evidence="1">
    <location>
        <begin position="345"/>
        <end position="412"/>
    </location>
</feature>
<feature type="short sequence motif" description="'HIGH' region">
    <location>
        <begin position="43"/>
        <end position="52"/>
    </location>
</feature>
<feature type="short sequence motif" description="'KMSKS' region">
    <location>
        <begin position="232"/>
        <end position="236"/>
    </location>
</feature>
<feature type="binding site" evidence="1">
    <location>
        <position position="38"/>
    </location>
    <ligand>
        <name>L-tyrosine</name>
        <dbReference type="ChEBI" id="CHEBI:58315"/>
    </ligand>
</feature>
<feature type="binding site" evidence="1">
    <location>
        <position position="172"/>
    </location>
    <ligand>
        <name>L-tyrosine</name>
        <dbReference type="ChEBI" id="CHEBI:58315"/>
    </ligand>
</feature>
<feature type="binding site" evidence="1">
    <location>
        <position position="176"/>
    </location>
    <ligand>
        <name>L-tyrosine</name>
        <dbReference type="ChEBI" id="CHEBI:58315"/>
    </ligand>
</feature>
<feature type="binding site" evidence="1">
    <location>
        <position position="235"/>
    </location>
    <ligand>
        <name>ATP</name>
        <dbReference type="ChEBI" id="CHEBI:30616"/>
    </ligand>
</feature>
<accession>Q5P9K5</accession>
<comment type="function">
    <text evidence="1">Catalyzes the attachment of tyrosine to tRNA(Tyr) in a two-step reaction: tyrosine is first activated by ATP to form Tyr-AMP and then transferred to the acceptor end of tRNA(Tyr).</text>
</comment>
<comment type="catalytic activity">
    <reaction evidence="1">
        <text>tRNA(Tyr) + L-tyrosine + ATP = L-tyrosyl-tRNA(Tyr) + AMP + diphosphate + H(+)</text>
        <dbReference type="Rhea" id="RHEA:10220"/>
        <dbReference type="Rhea" id="RHEA-COMP:9706"/>
        <dbReference type="Rhea" id="RHEA-COMP:9707"/>
        <dbReference type="ChEBI" id="CHEBI:15378"/>
        <dbReference type="ChEBI" id="CHEBI:30616"/>
        <dbReference type="ChEBI" id="CHEBI:33019"/>
        <dbReference type="ChEBI" id="CHEBI:58315"/>
        <dbReference type="ChEBI" id="CHEBI:78442"/>
        <dbReference type="ChEBI" id="CHEBI:78536"/>
        <dbReference type="ChEBI" id="CHEBI:456215"/>
        <dbReference type="EC" id="6.1.1.1"/>
    </reaction>
</comment>
<comment type="subunit">
    <text evidence="1">Homodimer.</text>
</comment>
<comment type="subcellular location">
    <subcellularLocation>
        <location evidence="1">Cytoplasm</location>
    </subcellularLocation>
</comment>
<comment type="similarity">
    <text evidence="1">Belongs to the class-I aminoacyl-tRNA synthetase family. TyrS type 1 subfamily.</text>
</comment>
<keyword id="KW-0030">Aminoacyl-tRNA synthetase</keyword>
<keyword id="KW-0067">ATP-binding</keyword>
<keyword id="KW-0963">Cytoplasm</keyword>
<keyword id="KW-0436">Ligase</keyword>
<keyword id="KW-0547">Nucleotide-binding</keyword>
<keyword id="KW-0648">Protein biosynthesis</keyword>
<keyword id="KW-0694">RNA-binding</keyword>
<protein>
    <recommendedName>
        <fullName evidence="1">Tyrosine--tRNA ligase</fullName>
        <ecNumber evidence="1">6.1.1.1</ecNumber>
    </recommendedName>
    <alternativeName>
        <fullName evidence="1">Tyrosyl-tRNA synthetase</fullName>
        <shortName evidence="1">TyrRS</shortName>
    </alternativeName>
</protein>
<gene>
    <name evidence="1" type="primary">tyrS</name>
    <name type="ordered locus">AM1205</name>
</gene>
<name>SYY_ANAMM</name>
<proteinExistence type="inferred from homology"/>
<evidence type="ECO:0000255" key="1">
    <source>
        <dbReference type="HAMAP-Rule" id="MF_02006"/>
    </source>
</evidence>
<organism>
    <name type="scientific">Anaplasma marginale (strain St. Maries)</name>
    <dbReference type="NCBI Taxonomy" id="234826"/>
    <lineage>
        <taxon>Bacteria</taxon>
        <taxon>Pseudomonadati</taxon>
        <taxon>Pseudomonadota</taxon>
        <taxon>Alphaproteobacteria</taxon>
        <taxon>Rickettsiales</taxon>
        <taxon>Anaplasmataceae</taxon>
        <taxon>Anaplasma</taxon>
    </lineage>
</organism>
<sequence>MEFKSGFLNTLQVRGYLHQCTDDVALDELMALQPITAYIGFDCTARSLHIGSLMQIMVMRYLQKFGHKIVVLLGGGTTKIGDPSGKDKARAMLSEAEIAANKAGILATINKFLNQGDGVVIADNAEWLGEVRYLEFLREIGSKFSVNAMLGLDSVRSRLDRDQNLSFLEFSYVLLQSYDFVELHRRHKCVLQIGGADQWGNIVNGIDLGRKLGLPQLYGLTTHLLLTSTGEKMGKTADGAVWLDAEMFDPGNYWQYFRNVADVEVGRLLRLFTELPMNEIAELENLQGEAINEAKKVLATEATAICHGKSAALAAENAALQVFEHNDDAGLPHFPLHKSLIAQGISVAKLLQLAGLEESISAGRRLIKGRGCKINGMVVEDADHALTHADFARNSGYITVFCGKKRRIKVVVED</sequence>
<reference key="1">
    <citation type="journal article" date="2005" name="Proc. Natl. Acad. Sci. U.S.A.">
        <title>Complete genome sequencing of Anaplasma marginale reveals that the surface is skewed to two superfamilies of outer membrane proteins.</title>
        <authorList>
            <person name="Brayton K.A."/>
            <person name="Kappmeyer L.S."/>
            <person name="Herndon D.R."/>
            <person name="Dark M.J."/>
            <person name="Tibbals D.L."/>
            <person name="Palmer G.H."/>
            <person name="McGuire T.C."/>
            <person name="Knowles D.P. Jr."/>
        </authorList>
    </citation>
    <scope>NUCLEOTIDE SEQUENCE [LARGE SCALE GENOMIC DNA]</scope>
    <source>
        <strain>St. Maries</strain>
    </source>
</reference>